<evidence type="ECO:0000255" key="1">
    <source>
        <dbReference type="HAMAP-Rule" id="MF_00218"/>
    </source>
</evidence>
<reference key="1">
    <citation type="journal article" date="2008" name="BMC Genomics">
        <title>The missing link: Bordetella petrii is endowed with both the metabolic versatility of environmental bacteria and virulence traits of pathogenic Bordetellae.</title>
        <authorList>
            <person name="Gross R."/>
            <person name="Guzman C.A."/>
            <person name="Sebaihia M."/>
            <person name="Martin dos Santos V.A.P."/>
            <person name="Pieper D.H."/>
            <person name="Koebnik R."/>
            <person name="Lechner M."/>
            <person name="Bartels D."/>
            <person name="Buhrmester J."/>
            <person name="Choudhuri J.V."/>
            <person name="Ebensen T."/>
            <person name="Gaigalat L."/>
            <person name="Herrmann S."/>
            <person name="Khachane A.N."/>
            <person name="Larisch C."/>
            <person name="Link S."/>
            <person name="Linke B."/>
            <person name="Meyer F."/>
            <person name="Mormann S."/>
            <person name="Nakunst D."/>
            <person name="Rueckert C."/>
            <person name="Schneiker-Bekel S."/>
            <person name="Schulze K."/>
            <person name="Voerholter F.-J."/>
            <person name="Yevsa T."/>
            <person name="Engle J.T."/>
            <person name="Goldman W.E."/>
            <person name="Puehler A."/>
            <person name="Goebel U.B."/>
            <person name="Goesmann A."/>
            <person name="Bloecker H."/>
            <person name="Kaiser O."/>
            <person name="Martinez-Arias R."/>
        </authorList>
    </citation>
    <scope>NUCLEOTIDE SEQUENCE [LARGE SCALE GENOMIC DNA]</scope>
    <source>
        <strain>ATCC BAA-461 / DSM 12804 / CCUG 43448</strain>
    </source>
</reference>
<dbReference type="EC" id="4.1.1.37" evidence="1"/>
<dbReference type="EMBL" id="AM902716">
    <property type="protein sequence ID" value="CAP40678.1"/>
    <property type="molecule type" value="Genomic_DNA"/>
</dbReference>
<dbReference type="SMR" id="A9HY51"/>
<dbReference type="STRING" id="94624.Bpet0346"/>
<dbReference type="KEGG" id="bpt:Bpet0346"/>
<dbReference type="eggNOG" id="COG0407">
    <property type="taxonomic scope" value="Bacteria"/>
</dbReference>
<dbReference type="UniPathway" id="UPA00251">
    <property type="reaction ID" value="UER00321"/>
</dbReference>
<dbReference type="Proteomes" id="UP000001225">
    <property type="component" value="Chromosome"/>
</dbReference>
<dbReference type="GO" id="GO:0005829">
    <property type="term" value="C:cytosol"/>
    <property type="evidence" value="ECO:0007669"/>
    <property type="project" value="TreeGrafter"/>
</dbReference>
<dbReference type="GO" id="GO:0004853">
    <property type="term" value="F:uroporphyrinogen decarboxylase activity"/>
    <property type="evidence" value="ECO:0007669"/>
    <property type="project" value="UniProtKB-UniRule"/>
</dbReference>
<dbReference type="GO" id="GO:0019353">
    <property type="term" value="P:protoporphyrinogen IX biosynthetic process from glutamate"/>
    <property type="evidence" value="ECO:0007669"/>
    <property type="project" value="TreeGrafter"/>
</dbReference>
<dbReference type="CDD" id="cd00717">
    <property type="entry name" value="URO-D"/>
    <property type="match status" value="1"/>
</dbReference>
<dbReference type="FunFam" id="3.20.20.210:FF:000001">
    <property type="entry name" value="Uroporphyrinogen decarboxylase"/>
    <property type="match status" value="1"/>
</dbReference>
<dbReference type="Gene3D" id="3.20.20.210">
    <property type="match status" value="1"/>
</dbReference>
<dbReference type="HAMAP" id="MF_00218">
    <property type="entry name" value="URO_D"/>
    <property type="match status" value="1"/>
</dbReference>
<dbReference type="InterPro" id="IPR038071">
    <property type="entry name" value="UROD/MetE-like_sf"/>
</dbReference>
<dbReference type="InterPro" id="IPR006361">
    <property type="entry name" value="Uroporphyrinogen_deCO2ase_HemE"/>
</dbReference>
<dbReference type="InterPro" id="IPR000257">
    <property type="entry name" value="Uroporphyrinogen_deCOase"/>
</dbReference>
<dbReference type="NCBIfam" id="TIGR01464">
    <property type="entry name" value="hemE"/>
    <property type="match status" value="1"/>
</dbReference>
<dbReference type="PANTHER" id="PTHR21091">
    <property type="entry name" value="METHYLTETRAHYDROFOLATE:HOMOCYSTEINE METHYLTRANSFERASE RELATED"/>
    <property type="match status" value="1"/>
</dbReference>
<dbReference type="PANTHER" id="PTHR21091:SF169">
    <property type="entry name" value="UROPORPHYRINOGEN DECARBOXYLASE"/>
    <property type="match status" value="1"/>
</dbReference>
<dbReference type="Pfam" id="PF01208">
    <property type="entry name" value="URO-D"/>
    <property type="match status" value="1"/>
</dbReference>
<dbReference type="SUPFAM" id="SSF51726">
    <property type="entry name" value="UROD/MetE-like"/>
    <property type="match status" value="1"/>
</dbReference>
<dbReference type="PROSITE" id="PS00906">
    <property type="entry name" value="UROD_1"/>
    <property type="match status" value="1"/>
</dbReference>
<dbReference type="PROSITE" id="PS00907">
    <property type="entry name" value="UROD_2"/>
    <property type="match status" value="1"/>
</dbReference>
<sequence length="358" mass="39043">MSAAALKNDVFLRALLRQPVPYTPIWLMRQAGRYLPEYNATRARAGSFMGLAQNPDYAAEVTLQPLARYDLDAAILFSDILTVPHAMGLGLDFAPGEGPRFARPLRTEDDVARLAVPDMESLRYVFDAVAVIRRELDGKVPLIGFAGSPWTIACYMVEGRGSDDYRLIKTMLYARPDLLHRILEVNAQATLQYLNAQIQAGAQAVMLFDSWGGVLADGLFQQFSLAYTRKVVAGLIREHQGRRVPAIVFTKGGGQWLEAIAACGCDAIGLDWTVNLGQARQRTGDAVALQGNLDPMTLFGGSEAIRAEARRTLDAFGPVGTGGHVFNLGHGISQYTPPEAVAELVDEVHTYSRALHAK</sequence>
<name>DCUP_BORPD</name>
<proteinExistence type="inferred from homology"/>
<gene>
    <name evidence="1" type="primary">hemE</name>
    <name type="ordered locus">Bpet0346</name>
</gene>
<keyword id="KW-0963">Cytoplasm</keyword>
<keyword id="KW-0210">Decarboxylase</keyword>
<keyword id="KW-0456">Lyase</keyword>
<keyword id="KW-0627">Porphyrin biosynthesis</keyword>
<protein>
    <recommendedName>
        <fullName evidence="1">Uroporphyrinogen decarboxylase</fullName>
        <shortName evidence="1">UPD</shortName>
        <shortName evidence="1">URO-D</shortName>
        <ecNumber evidence="1">4.1.1.37</ecNumber>
    </recommendedName>
</protein>
<feature type="chain" id="PRO_1000099974" description="Uroporphyrinogen decarboxylase">
    <location>
        <begin position="1"/>
        <end position="358"/>
    </location>
</feature>
<feature type="binding site" evidence="1">
    <location>
        <begin position="29"/>
        <end position="33"/>
    </location>
    <ligand>
        <name>substrate</name>
    </ligand>
</feature>
<feature type="binding site" evidence="1">
    <location>
        <position position="79"/>
    </location>
    <ligand>
        <name>substrate</name>
    </ligand>
</feature>
<feature type="binding site" evidence="1">
    <location>
        <position position="155"/>
    </location>
    <ligand>
        <name>substrate</name>
    </ligand>
</feature>
<feature type="binding site" evidence="1">
    <location>
        <position position="210"/>
    </location>
    <ligand>
        <name>substrate</name>
    </ligand>
</feature>
<feature type="binding site" evidence="1">
    <location>
        <position position="330"/>
    </location>
    <ligand>
        <name>substrate</name>
    </ligand>
</feature>
<feature type="site" description="Transition state stabilizer" evidence="1">
    <location>
        <position position="79"/>
    </location>
</feature>
<comment type="function">
    <text evidence="1">Catalyzes the decarboxylation of four acetate groups of uroporphyrinogen-III to yield coproporphyrinogen-III.</text>
</comment>
<comment type="catalytic activity">
    <reaction evidence="1">
        <text>uroporphyrinogen III + 4 H(+) = coproporphyrinogen III + 4 CO2</text>
        <dbReference type="Rhea" id="RHEA:19865"/>
        <dbReference type="ChEBI" id="CHEBI:15378"/>
        <dbReference type="ChEBI" id="CHEBI:16526"/>
        <dbReference type="ChEBI" id="CHEBI:57308"/>
        <dbReference type="ChEBI" id="CHEBI:57309"/>
        <dbReference type="EC" id="4.1.1.37"/>
    </reaction>
</comment>
<comment type="pathway">
    <text evidence="1">Porphyrin-containing compound metabolism; protoporphyrin-IX biosynthesis; coproporphyrinogen-III from 5-aminolevulinate: step 4/4.</text>
</comment>
<comment type="subunit">
    <text evidence="1">Homodimer.</text>
</comment>
<comment type="subcellular location">
    <subcellularLocation>
        <location evidence="1">Cytoplasm</location>
    </subcellularLocation>
</comment>
<comment type="similarity">
    <text evidence="1">Belongs to the uroporphyrinogen decarboxylase family.</text>
</comment>
<accession>A9HY51</accession>
<organism>
    <name type="scientific">Bordetella petrii (strain ATCC BAA-461 / DSM 12804 / CCUG 43448)</name>
    <dbReference type="NCBI Taxonomy" id="340100"/>
    <lineage>
        <taxon>Bacteria</taxon>
        <taxon>Pseudomonadati</taxon>
        <taxon>Pseudomonadota</taxon>
        <taxon>Betaproteobacteria</taxon>
        <taxon>Burkholderiales</taxon>
        <taxon>Alcaligenaceae</taxon>
        <taxon>Bordetella</taxon>
    </lineage>
</organism>